<dbReference type="EMBL" id="CP000961">
    <property type="protein sequence ID" value="ACA88056.1"/>
    <property type="molecule type" value="Genomic_DNA"/>
</dbReference>
<dbReference type="RefSeq" id="WP_012326387.1">
    <property type="nucleotide sequence ID" value="NC_010506.1"/>
</dbReference>
<dbReference type="SMR" id="B1KEP1"/>
<dbReference type="STRING" id="392500.Swoo_3797"/>
<dbReference type="KEGG" id="swd:Swoo_3797"/>
<dbReference type="eggNOG" id="COG1489">
    <property type="taxonomic scope" value="Bacteria"/>
</dbReference>
<dbReference type="HOGENOM" id="CLU_052299_2_0_6"/>
<dbReference type="Proteomes" id="UP000002168">
    <property type="component" value="Chromosome"/>
</dbReference>
<dbReference type="GO" id="GO:0003677">
    <property type="term" value="F:DNA binding"/>
    <property type="evidence" value="ECO:0007669"/>
    <property type="project" value="InterPro"/>
</dbReference>
<dbReference type="CDD" id="cd22359">
    <property type="entry name" value="SfsA-like_bacterial"/>
    <property type="match status" value="1"/>
</dbReference>
<dbReference type="FunFam" id="2.40.50.580:FF:000001">
    <property type="entry name" value="Sugar fermentation stimulation protein A"/>
    <property type="match status" value="1"/>
</dbReference>
<dbReference type="FunFam" id="3.40.1350.60:FF:000001">
    <property type="entry name" value="Sugar fermentation stimulation protein A"/>
    <property type="match status" value="1"/>
</dbReference>
<dbReference type="Gene3D" id="2.40.50.580">
    <property type="match status" value="1"/>
</dbReference>
<dbReference type="Gene3D" id="3.40.1350.60">
    <property type="match status" value="1"/>
</dbReference>
<dbReference type="HAMAP" id="MF_00095">
    <property type="entry name" value="SfsA"/>
    <property type="match status" value="1"/>
</dbReference>
<dbReference type="InterPro" id="IPR005224">
    <property type="entry name" value="SfsA"/>
</dbReference>
<dbReference type="InterPro" id="IPR040452">
    <property type="entry name" value="SfsA_C"/>
</dbReference>
<dbReference type="InterPro" id="IPR041465">
    <property type="entry name" value="SfsA_N"/>
</dbReference>
<dbReference type="NCBIfam" id="TIGR00230">
    <property type="entry name" value="sfsA"/>
    <property type="match status" value="1"/>
</dbReference>
<dbReference type="PANTHER" id="PTHR30545">
    <property type="entry name" value="SUGAR FERMENTATION STIMULATION PROTEIN A"/>
    <property type="match status" value="1"/>
</dbReference>
<dbReference type="PANTHER" id="PTHR30545:SF2">
    <property type="entry name" value="SUGAR FERMENTATION STIMULATION PROTEIN A"/>
    <property type="match status" value="1"/>
</dbReference>
<dbReference type="Pfam" id="PF03749">
    <property type="entry name" value="SfsA"/>
    <property type="match status" value="1"/>
</dbReference>
<dbReference type="Pfam" id="PF17746">
    <property type="entry name" value="SfsA_N"/>
    <property type="match status" value="1"/>
</dbReference>
<sequence length="239" mass="27001">MEFTPSFEQGTLIKRYKRFLTDIRLEDGSEVTIHCPNTGSMRNCLFEGKKVWFSISDNPKRKYSRTWEQAESDCGDIIGINTGRANQLAEDAIKSGVITELQDYDLLKREVKYGSENSRIDILLTDNDSHNEPKPHCYIEVKSCTLLEDGQGYFPDAVTTRGQKHLRELMEMVSMGHRAVLLFVVQHTGIESVMAAKHIDPDYAELLSQAHQAGVEILAYNTEMSPNQASLLKSCPVKL</sequence>
<name>SFSA_SHEWM</name>
<gene>
    <name evidence="1" type="primary">sfsA</name>
    <name type="ordered locus">Swoo_3797</name>
</gene>
<comment type="similarity">
    <text evidence="1">Belongs to the SfsA family.</text>
</comment>
<keyword id="KW-1185">Reference proteome</keyword>
<proteinExistence type="inferred from homology"/>
<evidence type="ECO:0000255" key="1">
    <source>
        <dbReference type="HAMAP-Rule" id="MF_00095"/>
    </source>
</evidence>
<organism>
    <name type="scientific">Shewanella woodyi (strain ATCC 51908 / MS32)</name>
    <dbReference type="NCBI Taxonomy" id="392500"/>
    <lineage>
        <taxon>Bacteria</taxon>
        <taxon>Pseudomonadati</taxon>
        <taxon>Pseudomonadota</taxon>
        <taxon>Gammaproteobacteria</taxon>
        <taxon>Alteromonadales</taxon>
        <taxon>Shewanellaceae</taxon>
        <taxon>Shewanella</taxon>
    </lineage>
</organism>
<protein>
    <recommendedName>
        <fullName evidence="1">Sugar fermentation stimulation protein homolog</fullName>
    </recommendedName>
</protein>
<feature type="chain" id="PRO_1000093593" description="Sugar fermentation stimulation protein homolog">
    <location>
        <begin position="1"/>
        <end position="239"/>
    </location>
</feature>
<accession>B1KEP1</accession>
<reference key="1">
    <citation type="submission" date="2008-02" db="EMBL/GenBank/DDBJ databases">
        <title>Complete sequence of Shewanella woodyi ATCC 51908.</title>
        <authorList>
            <consortium name="US DOE Joint Genome Institute"/>
            <person name="Copeland A."/>
            <person name="Lucas S."/>
            <person name="Lapidus A."/>
            <person name="Glavina del Rio T."/>
            <person name="Dalin E."/>
            <person name="Tice H."/>
            <person name="Bruce D."/>
            <person name="Goodwin L."/>
            <person name="Pitluck S."/>
            <person name="Sims D."/>
            <person name="Brettin T."/>
            <person name="Detter J.C."/>
            <person name="Han C."/>
            <person name="Kuske C.R."/>
            <person name="Schmutz J."/>
            <person name="Larimer F."/>
            <person name="Land M."/>
            <person name="Hauser L."/>
            <person name="Kyrpides N."/>
            <person name="Lykidis A."/>
            <person name="Zhao J.-S."/>
            <person name="Richardson P."/>
        </authorList>
    </citation>
    <scope>NUCLEOTIDE SEQUENCE [LARGE SCALE GENOMIC DNA]</scope>
    <source>
        <strain>ATCC 51908 / MS32</strain>
    </source>
</reference>